<comment type="function">
    <text evidence="1">Catalyzes the reversible isomerization of glucose-6-phosphate to fructose-6-phosphate.</text>
</comment>
<comment type="catalytic activity">
    <reaction evidence="1">
        <text>alpha-D-glucose 6-phosphate = beta-D-fructose 6-phosphate</text>
        <dbReference type="Rhea" id="RHEA:11816"/>
        <dbReference type="ChEBI" id="CHEBI:57634"/>
        <dbReference type="ChEBI" id="CHEBI:58225"/>
        <dbReference type="EC" id="5.3.1.9"/>
    </reaction>
</comment>
<comment type="pathway">
    <text evidence="1">Carbohydrate biosynthesis; gluconeogenesis.</text>
</comment>
<comment type="pathway">
    <text evidence="1">Carbohydrate degradation; glycolysis; D-glyceraldehyde 3-phosphate and glycerone phosphate from D-glucose: step 2/4.</text>
</comment>
<comment type="subcellular location">
    <subcellularLocation>
        <location evidence="1">Cytoplasm</location>
    </subcellularLocation>
</comment>
<comment type="similarity">
    <text evidence="1">Belongs to the GPI family.</text>
</comment>
<protein>
    <recommendedName>
        <fullName evidence="1">Glucose-6-phosphate isomerase</fullName>
        <shortName evidence="1">GPI</shortName>
        <ecNumber evidence="1">5.3.1.9</ecNumber>
    </recommendedName>
    <alternativeName>
        <fullName evidence="1">Phosphoglucose isomerase</fullName>
        <shortName evidence="1">PGI</shortName>
    </alternativeName>
    <alternativeName>
        <fullName evidence="1">Phosphohexose isomerase</fullName>
        <shortName evidence="1">PHI</shortName>
    </alternativeName>
</protein>
<organism>
    <name type="scientific">Acinetobacter baumannii (strain ATCC 17978 / DSM 105126 / CIP 53.77 / LMG 1025 / NCDC KC755 / 5377)</name>
    <dbReference type="NCBI Taxonomy" id="400667"/>
    <lineage>
        <taxon>Bacteria</taxon>
        <taxon>Pseudomonadati</taxon>
        <taxon>Pseudomonadota</taxon>
        <taxon>Gammaproteobacteria</taxon>
        <taxon>Moraxellales</taxon>
        <taxon>Moraxellaceae</taxon>
        <taxon>Acinetobacter</taxon>
        <taxon>Acinetobacter calcoaceticus/baumannii complex</taxon>
    </lineage>
</organism>
<keyword id="KW-0963">Cytoplasm</keyword>
<keyword id="KW-0312">Gluconeogenesis</keyword>
<keyword id="KW-0324">Glycolysis</keyword>
<keyword id="KW-0413">Isomerase</keyword>
<reference key="1">
    <citation type="journal article" date="2007" name="Genes Dev.">
        <title>New insights into Acinetobacter baumannii pathogenesis revealed by high-density pyrosequencing and transposon mutagenesis.</title>
        <authorList>
            <person name="Smith M.G."/>
            <person name="Gianoulis T.A."/>
            <person name="Pukatzki S."/>
            <person name="Mekalanos J.J."/>
            <person name="Ornston L.N."/>
            <person name="Gerstein M."/>
            <person name="Snyder M."/>
        </authorList>
    </citation>
    <scope>NUCLEOTIDE SEQUENCE [LARGE SCALE GENOMIC DNA]</scope>
    <source>
        <strain>ATCC 17978 / DSM 105126 / CIP 53.77 / LMG 1025 / NCDC KC755 / 5377</strain>
    </source>
</reference>
<accession>A3M0W5</accession>
<feature type="chain" id="PRO_1000125684" description="Glucose-6-phosphate isomerase">
    <location>
        <begin position="1"/>
        <end position="556"/>
    </location>
</feature>
<feature type="active site" description="Proton donor" evidence="1">
    <location>
        <position position="360"/>
    </location>
</feature>
<feature type="active site" evidence="1">
    <location>
        <position position="391"/>
    </location>
</feature>
<feature type="active site" evidence="1">
    <location>
        <position position="519"/>
    </location>
</feature>
<name>G6PI_ACIBT</name>
<dbReference type="EC" id="5.3.1.9" evidence="1"/>
<dbReference type="EMBL" id="CP000521">
    <property type="protein sequence ID" value="ABO10559.2"/>
    <property type="molecule type" value="Genomic_DNA"/>
</dbReference>
<dbReference type="RefSeq" id="WP_000045501.1">
    <property type="nucleotide sequence ID" value="NZ_CACVBA010000001.1"/>
</dbReference>
<dbReference type="SMR" id="A3M0W5"/>
<dbReference type="KEGG" id="acb:A1S_0064"/>
<dbReference type="HOGENOM" id="CLU_017947_3_1_6"/>
<dbReference type="UniPathway" id="UPA00109">
    <property type="reaction ID" value="UER00181"/>
</dbReference>
<dbReference type="UniPathway" id="UPA00138"/>
<dbReference type="GO" id="GO:0005829">
    <property type="term" value="C:cytosol"/>
    <property type="evidence" value="ECO:0007669"/>
    <property type="project" value="TreeGrafter"/>
</dbReference>
<dbReference type="GO" id="GO:0097367">
    <property type="term" value="F:carbohydrate derivative binding"/>
    <property type="evidence" value="ECO:0007669"/>
    <property type="project" value="InterPro"/>
</dbReference>
<dbReference type="GO" id="GO:0004347">
    <property type="term" value="F:glucose-6-phosphate isomerase activity"/>
    <property type="evidence" value="ECO:0007669"/>
    <property type="project" value="UniProtKB-UniRule"/>
</dbReference>
<dbReference type="GO" id="GO:0048029">
    <property type="term" value="F:monosaccharide binding"/>
    <property type="evidence" value="ECO:0007669"/>
    <property type="project" value="TreeGrafter"/>
</dbReference>
<dbReference type="GO" id="GO:0006094">
    <property type="term" value="P:gluconeogenesis"/>
    <property type="evidence" value="ECO:0007669"/>
    <property type="project" value="UniProtKB-UniRule"/>
</dbReference>
<dbReference type="GO" id="GO:0051156">
    <property type="term" value="P:glucose 6-phosphate metabolic process"/>
    <property type="evidence" value="ECO:0007669"/>
    <property type="project" value="TreeGrafter"/>
</dbReference>
<dbReference type="GO" id="GO:0006096">
    <property type="term" value="P:glycolytic process"/>
    <property type="evidence" value="ECO:0007669"/>
    <property type="project" value="UniProtKB-UniRule"/>
</dbReference>
<dbReference type="CDD" id="cd05015">
    <property type="entry name" value="SIS_PGI_1"/>
    <property type="match status" value="1"/>
</dbReference>
<dbReference type="CDD" id="cd05016">
    <property type="entry name" value="SIS_PGI_2"/>
    <property type="match status" value="1"/>
</dbReference>
<dbReference type="Gene3D" id="1.10.1390.10">
    <property type="match status" value="1"/>
</dbReference>
<dbReference type="Gene3D" id="3.40.50.10490">
    <property type="entry name" value="Glucose-6-phosphate isomerase like protein, domain 1"/>
    <property type="match status" value="2"/>
</dbReference>
<dbReference type="HAMAP" id="MF_00473">
    <property type="entry name" value="G6P_isomerase"/>
    <property type="match status" value="1"/>
</dbReference>
<dbReference type="InterPro" id="IPR001672">
    <property type="entry name" value="G6P_Isomerase"/>
</dbReference>
<dbReference type="InterPro" id="IPR023096">
    <property type="entry name" value="G6P_Isomerase_C"/>
</dbReference>
<dbReference type="InterPro" id="IPR018189">
    <property type="entry name" value="Phosphoglucose_isomerase_CS"/>
</dbReference>
<dbReference type="InterPro" id="IPR046348">
    <property type="entry name" value="SIS_dom_sf"/>
</dbReference>
<dbReference type="InterPro" id="IPR035476">
    <property type="entry name" value="SIS_PGI_1"/>
</dbReference>
<dbReference type="InterPro" id="IPR035482">
    <property type="entry name" value="SIS_PGI_2"/>
</dbReference>
<dbReference type="NCBIfam" id="NF001211">
    <property type="entry name" value="PRK00179.1"/>
    <property type="match status" value="1"/>
</dbReference>
<dbReference type="PANTHER" id="PTHR11469">
    <property type="entry name" value="GLUCOSE-6-PHOSPHATE ISOMERASE"/>
    <property type="match status" value="1"/>
</dbReference>
<dbReference type="PANTHER" id="PTHR11469:SF1">
    <property type="entry name" value="GLUCOSE-6-PHOSPHATE ISOMERASE"/>
    <property type="match status" value="1"/>
</dbReference>
<dbReference type="Pfam" id="PF00342">
    <property type="entry name" value="PGI"/>
    <property type="match status" value="1"/>
</dbReference>
<dbReference type="PRINTS" id="PR00662">
    <property type="entry name" value="G6PISOMERASE"/>
</dbReference>
<dbReference type="SUPFAM" id="SSF53697">
    <property type="entry name" value="SIS domain"/>
    <property type="match status" value="1"/>
</dbReference>
<dbReference type="PROSITE" id="PS00765">
    <property type="entry name" value="P_GLUCOSE_ISOMERASE_1"/>
    <property type="match status" value="1"/>
</dbReference>
<dbReference type="PROSITE" id="PS00174">
    <property type="entry name" value="P_GLUCOSE_ISOMERASE_2"/>
    <property type="match status" value="1"/>
</dbReference>
<dbReference type="PROSITE" id="PS51463">
    <property type="entry name" value="P_GLUCOSE_ISOMERASE_3"/>
    <property type="match status" value="1"/>
</dbReference>
<evidence type="ECO:0000255" key="1">
    <source>
        <dbReference type="HAMAP-Rule" id="MF_00473"/>
    </source>
</evidence>
<proteinExistence type="inferred from homology"/>
<sequence>MSKSIEKFPKELVSPIAQLHSLVEKNSKLHIKELFAAEQDRFQNYSVKFDQLVFDYSKHRITKSVLEQLFALAKTKQLTHWIERLFSQDKVNCTEQRAAMHWALRLPSEYSKFPELTKQVHTQLQRMYALVEKIHAGQYRGATGEVIQDVVNIGVGGSDLGPQMVTHALCDFKVKTAKPLNVHFVSTMDGSQLSDLLHQLRPETTLFIISSKSFGTIDTLSNAQTVRQWLEKALGKHDRVVKSHFIGVSTKAEKMTEWGIAPENQLLLWDWVGGRYSLWSCIGFPIALTIGIDGFQQLLAGAHAVDEHFQNTSFEQNIPVLMALLGIWNNNFLNIQTHAVLPYDGRLKYFAAYLQQLEMESNGKSVQRDGQKVELDTCPIVWGEVGPNAQHAFYQLLHQGTQAVSCDFIAPIQRYNADHFTYVENAEALIEQHHLALSNCLAQSRLLAFGNEALDSAELKNLPIYKQYEGNQPSSTLLLKELNPYSLGMLIALYEHKVFVQSVIWNINPFDQWGVEKGKQIADQLLPILNGAQNDLSALDASTRGLIKILLGKVDG</sequence>
<gene>
    <name evidence="1" type="primary">pgi</name>
    <name type="ordered locus">A1S_0064</name>
</gene>